<feature type="chain" id="PRO_1000092040" description="5'-nucleotidase SurE">
    <location>
        <begin position="1"/>
        <end position="259"/>
    </location>
</feature>
<feature type="binding site" evidence="1">
    <location>
        <position position="8"/>
    </location>
    <ligand>
        <name>a divalent metal cation</name>
        <dbReference type="ChEBI" id="CHEBI:60240"/>
    </ligand>
</feature>
<feature type="binding site" evidence="1">
    <location>
        <position position="9"/>
    </location>
    <ligand>
        <name>a divalent metal cation</name>
        <dbReference type="ChEBI" id="CHEBI:60240"/>
    </ligand>
</feature>
<feature type="binding site" evidence="1">
    <location>
        <position position="40"/>
    </location>
    <ligand>
        <name>a divalent metal cation</name>
        <dbReference type="ChEBI" id="CHEBI:60240"/>
    </ligand>
</feature>
<feature type="binding site" evidence="1">
    <location>
        <position position="92"/>
    </location>
    <ligand>
        <name>a divalent metal cation</name>
        <dbReference type="ChEBI" id="CHEBI:60240"/>
    </ligand>
</feature>
<accession>B2FK94</accession>
<proteinExistence type="inferred from homology"/>
<organism>
    <name type="scientific">Stenotrophomonas maltophilia (strain K279a)</name>
    <dbReference type="NCBI Taxonomy" id="522373"/>
    <lineage>
        <taxon>Bacteria</taxon>
        <taxon>Pseudomonadati</taxon>
        <taxon>Pseudomonadota</taxon>
        <taxon>Gammaproteobacteria</taxon>
        <taxon>Lysobacterales</taxon>
        <taxon>Lysobacteraceae</taxon>
        <taxon>Stenotrophomonas</taxon>
        <taxon>Stenotrophomonas maltophilia group</taxon>
    </lineage>
</organism>
<protein>
    <recommendedName>
        <fullName evidence="1">5'-nucleotidase SurE</fullName>
        <ecNumber evidence="1">3.1.3.5</ecNumber>
    </recommendedName>
    <alternativeName>
        <fullName evidence="1">Nucleoside 5'-monophosphate phosphohydrolase</fullName>
    </alternativeName>
</protein>
<comment type="function">
    <text evidence="1">Nucleotidase that shows phosphatase activity on nucleoside 5'-monophosphates.</text>
</comment>
<comment type="catalytic activity">
    <reaction evidence="1">
        <text>a ribonucleoside 5'-phosphate + H2O = a ribonucleoside + phosphate</text>
        <dbReference type="Rhea" id="RHEA:12484"/>
        <dbReference type="ChEBI" id="CHEBI:15377"/>
        <dbReference type="ChEBI" id="CHEBI:18254"/>
        <dbReference type="ChEBI" id="CHEBI:43474"/>
        <dbReference type="ChEBI" id="CHEBI:58043"/>
        <dbReference type="EC" id="3.1.3.5"/>
    </reaction>
</comment>
<comment type="cofactor">
    <cofactor evidence="1">
        <name>a divalent metal cation</name>
        <dbReference type="ChEBI" id="CHEBI:60240"/>
    </cofactor>
    <text evidence="1">Binds 1 divalent metal cation per subunit.</text>
</comment>
<comment type="subcellular location">
    <subcellularLocation>
        <location evidence="1">Cytoplasm</location>
    </subcellularLocation>
</comment>
<comment type="similarity">
    <text evidence="1">Belongs to the SurE nucleotidase family.</text>
</comment>
<reference key="1">
    <citation type="journal article" date="2008" name="Genome Biol.">
        <title>The complete genome, comparative and functional analysis of Stenotrophomonas maltophilia reveals an organism heavily shielded by drug resistance determinants.</title>
        <authorList>
            <person name="Crossman L.C."/>
            <person name="Gould V.C."/>
            <person name="Dow J.M."/>
            <person name="Vernikos G.S."/>
            <person name="Okazaki A."/>
            <person name="Sebaihia M."/>
            <person name="Saunders D."/>
            <person name="Arrowsmith C."/>
            <person name="Carver T."/>
            <person name="Peters N."/>
            <person name="Adlem E."/>
            <person name="Kerhornou A."/>
            <person name="Lord A."/>
            <person name="Murphy L."/>
            <person name="Seeger K."/>
            <person name="Squares R."/>
            <person name="Rutter S."/>
            <person name="Quail M.A."/>
            <person name="Rajandream M.A."/>
            <person name="Harris D."/>
            <person name="Churcher C."/>
            <person name="Bentley S.D."/>
            <person name="Parkhill J."/>
            <person name="Thomson N.R."/>
            <person name="Avison M.B."/>
        </authorList>
    </citation>
    <scope>NUCLEOTIDE SEQUENCE [LARGE SCALE GENOMIC DNA]</scope>
    <source>
        <strain>K279a</strain>
    </source>
</reference>
<gene>
    <name evidence="1" type="primary">surE</name>
    <name type="ordered locus">Smlt1721</name>
</gene>
<sequence length="259" mass="27675">MRILVSNDDGVDAAGIRMLASVLREAGHEVTVVAPDRDRSGASNSLTLDLPIRLKRIDHYTVSVAGTPTDCVHLALTGLLEFEPDIVVSGINNAANLGDDVIYSGTVSAAMEGRFLGLPAVAVSLVTRNHDPKHFETAARAAVEIVARLKADPLPADTILNVNVPDLPWNEVKGFEVTRLGNRHRAEGCIAQKDPRGNEVYWIGPAGREQDSGPGTDFHAVRTGHISITPIQVDLTRYQALEKVASWVGGLSAALDQPA</sequence>
<dbReference type="EC" id="3.1.3.5" evidence="1"/>
<dbReference type="EMBL" id="AM743169">
    <property type="protein sequence ID" value="CAQ45245.1"/>
    <property type="molecule type" value="Genomic_DNA"/>
</dbReference>
<dbReference type="RefSeq" id="WP_005409008.1">
    <property type="nucleotide sequence ID" value="NC_010943.1"/>
</dbReference>
<dbReference type="SMR" id="B2FK94"/>
<dbReference type="EnsemblBacteria" id="CAQ45245">
    <property type="protein sequence ID" value="CAQ45245"/>
    <property type="gene ID" value="Smlt1721"/>
</dbReference>
<dbReference type="KEGG" id="sml:Smlt1721"/>
<dbReference type="eggNOG" id="COG0496">
    <property type="taxonomic scope" value="Bacteria"/>
</dbReference>
<dbReference type="HOGENOM" id="CLU_045192_1_2_6"/>
<dbReference type="Proteomes" id="UP000008840">
    <property type="component" value="Chromosome"/>
</dbReference>
<dbReference type="GO" id="GO:0005737">
    <property type="term" value="C:cytoplasm"/>
    <property type="evidence" value="ECO:0007669"/>
    <property type="project" value="UniProtKB-SubCell"/>
</dbReference>
<dbReference type="GO" id="GO:0008254">
    <property type="term" value="F:3'-nucleotidase activity"/>
    <property type="evidence" value="ECO:0007669"/>
    <property type="project" value="TreeGrafter"/>
</dbReference>
<dbReference type="GO" id="GO:0008253">
    <property type="term" value="F:5'-nucleotidase activity"/>
    <property type="evidence" value="ECO:0007669"/>
    <property type="project" value="UniProtKB-UniRule"/>
</dbReference>
<dbReference type="GO" id="GO:0004309">
    <property type="term" value="F:exopolyphosphatase activity"/>
    <property type="evidence" value="ECO:0007669"/>
    <property type="project" value="TreeGrafter"/>
</dbReference>
<dbReference type="GO" id="GO:0046872">
    <property type="term" value="F:metal ion binding"/>
    <property type="evidence" value="ECO:0007669"/>
    <property type="project" value="UniProtKB-UniRule"/>
</dbReference>
<dbReference type="GO" id="GO:0000166">
    <property type="term" value="F:nucleotide binding"/>
    <property type="evidence" value="ECO:0007669"/>
    <property type="project" value="UniProtKB-KW"/>
</dbReference>
<dbReference type="FunFam" id="3.40.1210.10:FF:000001">
    <property type="entry name" value="5'/3'-nucleotidase SurE"/>
    <property type="match status" value="1"/>
</dbReference>
<dbReference type="Gene3D" id="3.40.1210.10">
    <property type="entry name" value="Survival protein SurE-like phosphatase/nucleotidase"/>
    <property type="match status" value="1"/>
</dbReference>
<dbReference type="HAMAP" id="MF_00060">
    <property type="entry name" value="SurE"/>
    <property type="match status" value="1"/>
</dbReference>
<dbReference type="InterPro" id="IPR030048">
    <property type="entry name" value="SurE"/>
</dbReference>
<dbReference type="InterPro" id="IPR002828">
    <property type="entry name" value="SurE-like_Pase/nucleotidase"/>
</dbReference>
<dbReference type="InterPro" id="IPR036523">
    <property type="entry name" value="SurE-like_sf"/>
</dbReference>
<dbReference type="NCBIfam" id="NF001489">
    <property type="entry name" value="PRK00346.1-3"/>
    <property type="match status" value="1"/>
</dbReference>
<dbReference type="NCBIfam" id="NF001490">
    <property type="entry name" value="PRK00346.1-4"/>
    <property type="match status" value="1"/>
</dbReference>
<dbReference type="NCBIfam" id="TIGR00087">
    <property type="entry name" value="surE"/>
    <property type="match status" value="1"/>
</dbReference>
<dbReference type="PANTHER" id="PTHR30457">
    <property type="entry name" value="5'-NUCLEOTIDASE SURE"/>
    <property type="match status" value="1"/>
</dbReference>
<dbReference type="PANTHER" id="PTHR30457:SF12">
    <property type="entry name" value="5'_3'-NUCLEOTIDASE SURE"/>
    <property type="match status" value="1"/>
</dbReference>
<dbReference type="Pfam" id="PF01975">
    <property type="entry name" value="SurE"/>
    <property type="match status" value="1"/>
</dbReference>
<dbReference type="SUPFAM" id="SSF64167">
    <property type="entry name" value="SurE-like"/>
    <property type="match status" value="1"/>
</dbReference>
<evidence type="ECO:0000255" key="1">
    <source>
        <dbReference type="HAMAP-Rule" id="MF_00060"/>
    </source>
</evidence>
<name>SURE_STRMK</name>
<keyword id="KW-0963">Cytoplasm</keyword>
<keyword id="KW-0378">Hydrolase</keyword>
<keyword id="KW-0479">Metal-binding</keyword>
<keyword id="KW-0547">Nucleotide-binding</keyword>
<keyword id="KW-1185">Reference proteome</keyword>